<accession>D8VNS1</accession>
<accession>D8VNS2</accession>
<accession>D8VNS3</accession>
<accession>D8VNS4</accession>
<accession>D8VNS5</accession>
<sequence length="239" mass="27049">MIVFILLSLAAVLQQSVADVDFQSESPRRTEKQTEIVDMHNSFRRSVNPTARNMLKMEWYPEAADNAERWAYQCIYDHSANYERVIGGIQCGENIYKSSNPRAWSEMIQDWYDEYKNFVYGVGANPPGSMIGHYTQIVWYKSYRIGCAAAYCPSYPYNYFYVCQYCPVGNMEGLTATPYTSGPTCADCPSHCDDGLCTNPCPINNVFTNCDSLLQQSSCEDSYITTNCGASCFCQDKII</sequence>
<reference key="1">
    <citation type="journal article" date="2010" name="J. Proteome Res.">
        <title>Identification of a novel family of snake venom proteins Veficolins from Cerberus rynchops using a venom gland transcriptomics and proteomics approach.</title>
        <authorList>
            <person name="Ompraba G."/>
            <person name="Chapeaurouge A."/>
            <person name="Doley R."/>
            <person name="Devi K.R."/>
            <person name="Padmanaban P."/>
            <person name="Venkatraman C."/>
            <person name="Velmurugan D."/>
            <person name="Lin Q."/>
            <person name="Kini R.M."/>
        </authorList>
    </citation>
    <scope>NUCLEOTIDE SEQUENCE [MRNA]</scope>
    <scope>IDENTIFICATION BY MASS SPECTROMETRY</scope>
    <source>
        <tissue>Venom</tissue>
        <tissue>Venom gland</tissue>
    </source>
</reference>
<protein>
    <recommendedName>
        <fullName>Cysteine-rich venom protein</fullName>
        <shortName>CRVP</shortName>
    </recommendedName>
    <alternativeName>
        <fullName>Cysteine-rich secretory protein</fullName>
        <shortName>CRISP</shortName>
    </alternativeName>
</protein>
<proteinExistence type="evidence at protein level"/>
<comment type="function">
    <text evidence="1">Blocks contraction of smooth muscle elicited by high potassium-induced depolarization, but does not block caffeine-stimulated contraction. May target voltage-gated calcium channels on smooth muscle (By similarity).</text>
</comment>
<comment type="subcellular location">
    <subcellularLocation>
        <location>Secreted</location>
    </subcellularLocation>
</comment>
<comment type="tissue specificity">
    <text>Expressed by the venom gland.</text>
</comment>
<comment type="similarity">
    <text evidence="3">Belongs to the CRISP family.</text>
</comment>
<dbReference type="EMBL" id="GU065317">
    <property type="protein sequence ID" value="ADJ51056.1"/>
    <property type="molecule type" value="mRNA"/>
</dbReference>
<dbReference type="EMBL" id="GU065318">
    <property type="protein sequence ID" value="ADJ51057.1"/>
    <property type="molecule type" value="mRNA"/>
</dbReference>
<dbReference type="EMBL" id="GU065319">
    <property type="protein sequence ID" value="ADJ51058.1"/>
    <property type="molecule type" value="mRNA"/>
</dbReference>
<dbReference type="EMBL" id="GU065320">
    <property type="protein sequence ID" value="ADJ51059.1"/>
    <property type="molecule type" value="mRNA"/>
</dbReference>
<dbReference type="EMBL" id="GU065321">
    <property type="protein sequence ID" value="ADJ51060.1"/>
    <property type="molecule type" value="mRNA"/>
</dbReference>
<dbReference type="SMR" id="D8VNS1"/>
<dbReference type="GO" id="GO:0005576">
    <property type="term" value="C:extracellular region"/>
    <property type="evidence" value="ECO:0007669"/>
    <property type="project" value="UniProtKB-SubCell"/>
</dbReference>
<dbReference type="GO" id="GO:0005246">
    <property type="term" value="F:calcium channel regulator activity"/>
    <property type="evidence" value="ECO:0007669"/>
    <property type="project" value="UniProtKB-KW"/>
</dbReference>
<dbReference type="GO" id="GO:0090729">
    <property type="term" value="F:toxin activity"/>
    <property type="evidence" value="ECO:0007669"/>
    <property type="project" value="UniProtKB-KW"/>
</dbReference>
<dbReference type="CDD" id="cd05383">
    <property type="entry name" value="CAP_CRISP"/>
    <property type="match status" value="1"/>
</dbReference>
<dbReference type="FunFam" id="1.10.10.740:FF:000001">
    <property type="entry name" value="Cysteine-rich secretory protein 2"/>
    <property type="match status" value="1"/>
</dbReference>
<dbReference type="FunFam" id="3.40.33.10:FF:000005">
    <property type="entry name" value="Cysteine-rich secretory protein 2"/>
    <property type="match status" value="1"/>
</dbReference>
<dbReference type="Gene3D" id="3.40.33.10">
    <property type="entry name" value="CAP"/>
    <property type="match status" value="1"/>
</dbReference>
<dbReference type="Gene3D" id="1.10.10.740">
    <property type="entry name" value="Crisp domain"/>
    <property type="match status" value="1"/>
</dbReference>
<dbReference type="InterPro" id="IPR018244">
    <property type="entry name" value="Allrgn_V5/Tpx1_CS"/>
</dbReference>
<dbReference type="InterPro" id="IPR014044">
    <property type="entry name" value="CAP_dom"/>
</dbReference>
<dbReference type="InterPro" id="IPR035940">
    <property type="entry name" value="CAP_sf"/>
</dbReference>
<dbReference type="InterPro" id="IPR042076">
    <property type="entry name" value="Crisp-like_dom"/>
</dbReference>
<dbReference type="InterPro" id="IPR001283">
    <property type="entry name" value="CRISP-related"/>
</dbReference>
<dbReference type="InterPro" id="IPR013871">
    <property type="entry name" value="Cysteine_rich_secretory"/>
</dbReference>
<dbReference type="InterPro" id="IPR034117">
    <property type="entry name" value="SCP_CRISP"/>
</dbReference>
<dbReference type="InterPro" id="IPR003582">
    <property type="entry name" value="ShKT_dom"/>
</dbReference>
<dbReference type="PANTHER" id="PTHR10334">
    <property type="entry name" value="CYSTEINE-RICH SECRETORY PROTEIN-RELATED"/>
    <property type="match status" value="1"/>
</dbReference>
<dbReference type="Pfam" id="PF00188">
    <property type="entry name" value="CAP"/>
    <property type="match status" value="1"/>
</dbReference>
<dbReference type="Pfam" id="PF08562">
    <property type="entry name" value="Crisp"/>
    <property type="match status" value="1"/>
</dbReference>
<dbReference type="PRINTS" id="PR00837">
    <property type="entry name" value="V5TPXLIKE"/>
</dbReference>
<dbReference type="SMART" id="SM00198">
    <property type="entry name" value="SCP"/>
    <property type="match status" value="1"/>
</dbReference>
<dbReference type="SUPFAM" id="SSF57546">
    <property type="entry name" value="Crisp domain-like"/>
    <property type="match status" value="1"/>
</dbReference>
<dbReference type="SUPFAM" id="SSF55797">
    <property type="entry name" value="PR-1-like"/>
    <property type="match status" value="1"/>
</dbReference>
<dbReference type="PROSITE" id="PS01009">
    <property type="entry name" value="CRISP_1"/>
    <property type="match status" value="1"/>
</dbReference>
<dbReference type="PROSITE" id="PS01010">
    <property type="entry name" value="CRISP_2"/>
    <property type="match status" value="1"/>
</dbReference>
<dbReference type="PROSITE" id="PS51670">
    <property type="entry name" value="SHKT"/>
    <property type="match status" value="1"/>
</dbReference>
<organism>
    <name type="scientific">Cerberus rynchops</name>
    <name type="common">Dog-faced water snake</name>
    <dbReference type="NCBI Taxonomy" id="46267"/>
    <lineage>
        <taxon>Eukaryota</taxon>
        <taxon>Metazoa</taxon>
        <taxon>Chordata</taxon>
        <taxon>Craniata</taxon>
        <taxon>Vertebrata</taxon>
        <taxon>Euteleostomi</taxon>
        <taxon>Lepidosauria</taxon>
        <taxon>Squamata</taxon>
        <taxon>Bifurcata</taxon>
        <taxon>Unidentata</taxon>
        <taxon>Episquamata</taxon>
        <taxon>Toxicofera</taxon>
        <taxon>Serpentes</taxon>
        <taxon>Colubroidea</taxon>
        <taxon>Homalopsidae</taxon>
        <taxon>Cerberus</taxon>
    </lineage>
</organism>
<feature type="signal peptide" evidence="1">
    <location>
        <begin position="1"/>
        <end position="18"/>
    </location>
</feature>
<feature type="chain" id="PRO_0000414915" description="Cysteine-rich venom protein">
    <location>
        <begin position="19"/>
        <end position="239"/>
    </location>
</feature>
<feature type="domain" description="SCP">
    <location>
        <begin position="37"/>
        <end position="165"/>
    </location>
</feature>
<feature type="domain" description="ShKT" evidence="2">
    <location>
        <begin position="201"/>
        <end position="234"/>
    </location>
</feature>
<feature type="disulfide bond" evidence="2">
    <location>
        <begin position="74"/>
        <end position="152"/>
    </location>
</feature>
<feature type="disulfide bond" evidence="2">
    <location>
        <begin position="91"/>
        <end position="166"/>
    </location>
</feature>
<feature type="disulfide bond" evidence="2">
    <location>
        <begin position="147"/>
        <end position="163"/>
    </location>
</feature>
<feature type="disulfide bond" evidence="2">
    <location>
        <begin position="185"/>
        <end position="192"/>
    </location>
</feature>
<feature type="disulfide bond" evidence="2">
    <location>
        <begin position="188"/>
        <end position="197"/>
    </location>
</feature>
<feature type="disulfide bond" evidence="2">
    <location>
        <begin position="210"/>
        <end position="228"/>
    </location>
</feature>
<feature type="disulfide bond" evidence="2">
    <location>
        <begin position="219"/>
        <end position="232"/>
    </location>
</feature>
<feature type="sequence conflict" description="In Ref. 1; ADJ51057." evidence="3" ref="1">
    <original>Q</original>
    <variation>R</variation>
    <location>
        <position position="23"/>
    </location>
</feature>
<feature type="sequence conflict" description="In Ref. 1; ADJ51059." evidence="3" ref="1">
    <original>T</original>
    <variation>I</variation>
    <location>
        <position position="30"/>
    </location>
</feature>
<feature type="sequence conflict" description="In Ref. 1; ADJ51060." evidence="3" ref="1">
    <location>
        <begin position="70"/>
        <end position="239"/>
    </location>
</feature>
<feature type="sequence conflict" description="In Ref. 1; ADJ51058." evidence="3" ref="1">
    <original>F</original>
    <variation>L</variation>
    <location>
        <position position="207"/>
    </location>
</feature>
<name>CRVP_CERRY</name>
<evidence type="ECO:0000250" key="1"/>
<evidence type="ECO:0000255" key="2">
    <source>
        <dbReference type="PROSITE-ProRule" id="PRU01005"/>
    </source>
</evidence>
<evidence type="ECO:0000305" key="3"/>
<keyword id="KW-0108">Calcium channel impairing toxin</keyword>
<keyword id="KW-1015">Disulfide bond</keyword>
<keyword id="KW-0872">Ion channel impairing toxin</keyword>
<keyword id="KW-0528">Neurotoxin</keyword>
<keyword id="KW-0964">Secreted</keyword>
<keyword id="KW-0732">Signal</keyword>
<keyword id="KW-0800">Toxin</keyword>